<keyword id="KW-0963">Cytoplasm</keyword>
<keyword id="KW-0269">Exonuclease</keyword>
<keyword id="KW-0378">Hydrolase</keyword>
<keyword id="KW-0540">Nuclease</keyword>
<keyword id="KW-1185">Reference proteome</keyword>
<organism>
    <name type="scientific">Pasteurella multocida (strain Pm70)</name>
    <dbReference type="NCBI Taxonomy" id="272843"/>
    <lineage>
        <taxon>Bacteria</taxon>
        <taxon>Pseudomonadati</taxon>
        <taxon>Pseudomonadota</taxon>
        <taxon>Gammaproteobacteria</taxon>
        <taxon>Pasteurellales</taxon>
        <taxon>Pasteurellaceae</taxon>
        <taxon>Pasteurella</taxon>
    </lineage>
</organism>
<reference key="1">
    <citation type="journal article" date="2001" name="Proc. Natl. Acad. Sci. U.S.A.">
        <title>Complete genomic sequence of Pasteurella multocida Pm70.</title>
        <authorList>
            <person name="May B.J."/>
            <person name="Zhang Q."/>
            <person name="Li L.L."/>
            <person name="Paustian M.L."/>
            <person name="Whittam T.S."/>
            <person name="Kapur V."/>
        </authorList>
    </citation>
    <scope>NUCLEOTIDE SEQUENCE [LARGE SCALE GENOMIC DNA]</scope>
    <source>
        <strain>Pm70</strain>
    </source>
</reference>
<protein>
    <recommendedName>
        <fullName evidence="1">Oligoribonuclease</fullName>
        <ecNumber evidence="1">3.1.15.-</ecNumber>
    </recommendedName>
</protein>
<feature type="chain" id="PRO_0000111057" description="Oligoribonuclease">
    <location>
        <begin position="1"/>
        <end position="184"/>
    </location>
</feature>
<feature type="domain" description="Exonuclease" evidence="1">
    <location>
        <begin position="8"/>
        <end position="171"/>
    </location>
</feature>
<feature type="active site" evidence="1">
    <location>
        <position position="129"/>
    </location>
</feature>
<name>ORN_PASMU</name>
<accession>P57885</accession>
<evidence type="ECO:0000255" key="1">
    <source>
        <dbReference type="HAMAP-Rule" id="MF_00045"/>
    </source>
</evidence>
<proteinExistence type="inferred from homology"/>
<comment type="function">
    <text evidence="1">3'-to-5' exoribonuclease specific for small oligoribonucleotides.</text>
</comment>
<comment type="subcellular location">
    <subcellularLocation>
        <location evidence="1">Cytoplasm</location>
    </subcellularLocation>
</comment>
<comment type="similarity">
    <text evidence="1">Belongs to the oligoribonuclease family.</text>
</comment>
<gene>
    <name evidence="1" type="primary">orn</name>
    <name type="ordered locus">PM0900</name>
</gene>
<dbReference type="EC" id="3.1.15.-" evidence="1"/>
<dbReference type="EMBL" id="AE004439">
    <property type="protein sequence ID" value="AAK02984.1"/>
    <property type="molecule type" value="Genomic_DNA"/>
</dbReference>
<dbReference type="RefSeq" id="WP_005716958.1">
    <property type="nucleotide sequence ID" value="NC_002663.1"/>
</dbReference>
<dbReference type="SMR" id="P57885"/>
<dbReference type="STRING" id="272843.PM0900"/>
<dbReference type="EnsemblBacteria" id="AAK02984">
    <property type="protein sequence ID" value="AAK02984"/>
    <property type="gene ID" value="PM0900"/>
</dbReference>
<dbReference type="KEGG" id="pmu:PM0900"/>
<dbReference type="HOGENOM" id="CLU_064761_2_0_6"/>
<dbReference type="OrthoDB" id="9801329at2"/>
<dbReference type="Proteomes" id="UP000000809">
    <property type="component" value="Chromosome"/>
</dbReference>
<dbReference type="GO" id="GO:0005737">
    <property type="term" value="C:cytoplasm"/>
    <property type="evidence" value="ECO:0007669"/>
    <property type="project" value="UniProtKB-SubCell"/>
</dbReference>
<dbReference type="GO" id="GO:0000175">
    <property type="term" value="F:3'-5'-RNA exonuclease activity"/>
    <property type="evidence" value="ECO:0007669"/>
    <property type="project" value="InterPro"/>
</dbReference>
<dbReference type="GO" id="GO:0003676">
    <property type="term" value="F:nucleic acid binding"/>
    <property type="evidence" value="ECO:0007669"/>
    <property type="project" value="InterPro"/>
</dbReference>
<dbReference type="GO" id="GO:0006259">
    <property type="term" value="P:DNA metabolic process"/>
    <property type="evidence" value="ECO:0007669"/>
    <property type="project" value="UniProtKB-ARBA"/>
</dbReference>
<dbReference type="CDD" id="cd06135">
    <property type="entry name" value="Orn"/>
    <property type="match status" value="1"/>
</dbReference>
<dbReference type="FunFam" id="3.30.420.10:FF:000003">
    <property type="entry name" value="Oligoribonuclease"/>
    <property type="match status" value="1"/>
</dbReference>
<dbReference type="Gene3D" id="3.30.420.10">
    <property type="entry name" value="Ribonuclease H-like superfamily/Ribonuclease H"/>
    <property type="match status" value="1"/>
</dbReference>
<dbReference type="HAMAP" id="MF_00045">
    <property type="entry name" value="Oligoribonuclease"/>
    <property type="match status" value="1"/>
</dbReference>
<dbReference type="InterPro" id="IPR013520">
    <property type="entry name" value="Exonuclease_RNaseT/DNA_pol3"/>
</dbReference>
<dbReference type="InterPro" id="IPR022894">
    <property type="entry name" value="Oligoribonuclease"/>
</dbReference>
<dbReference type="InterPro" id="IPR012337">
    <property type="entry name" value="RNaseH-like_sf"/>
</dbReference>
<dbReference type="InterPro" id="IPR036397">
    <property type="entry name" value="RNaseH_sf"/>
</dbReference>
<dbReference type="NCBIfam" id="NF003765">
    <property type="entry name" value="PRK05359.1"/>
    <property type="match status" value="1"/>
</dbReference>
<dbReference type="PANTHER" id="PTHR11046">
    <property type="entry name" value="OLIGORIBONUCLEASE, MITOCHONDRIAL"/>
    <property type="match status" value="1"/>
</dbReference>
<dbReference type="PANTHER" id="PTHR11046:SF0">
    <property type="entry name" value="OLIGORIBONUCLEASE, MITOCHONDRIAL"/>
    <property type="match status" value="1"/>
</dbReference>
<dbReference type="Pfam" id="PF00929">
    <property type="entry name" value="RNase_T"/>
    <property type="match status" value="1"/>
</dbReference>
<dbReference type="SMART" id="SM00479">
    <property type="entry name" value="EXOIII"/>
    <property type="match status" value="1"/>
</dbReference>
<dbReference type="SUPFAM" id="SSF53098">
    <property type="entry name" value="Ribonuclease H-like"/>
    <property type="match status" value="1"/>
</dbReference>
<sequence length="184" mass="21428">MQLDKQNLIWIDLEMTGLDPESERIIEIATIVTDKHLNILAEGPVLAIHQSDECLAKMNDWCMKTHTENGLVERVKNSRLTERAAELQTLDFLKKWVPKGVSPICGNSVSQDKRFLFKYMPELADYFHYRHLDVSTLKELASRWKPDVLKGFTKKNTHLALDDIRESIAELAYYREHFINLKNE</sequence>